<sequence>MTTEDVIAIRVPTPFAVGDVIVYLVKGDALTLIDAGPNTKEAARALQEQLAAVNVKLSDIEQVVLTHHHADHAGLLDVFSDEIEVIGHTFNEPYISQNQAFMDWQKRFFQKLLPELGVPFDTGKAEKLIRSAYAFSCTRSLTKSIREGMGIDGLEGWSVLEMPGHAESHIVLFHEKSGRMLGGDLLLANSSSNPILEAPKAGDVRSKPLVDYQRSLRRLSQLDPTIVFPGHGEPITSVQALIEKRFDKQRNRTEDVRRMLDEKPMTAFQVCQQLFPAVYEKELFLTMSETAGHLDVLEAEEAITSYWEGNTVYFKTMKR</sequence>
<accession>P54553</accession>
<proteinExistence type="inferred from homology"/>
<comment type="cofactor">
    <cofactor evidence="1">
        <name>Zn(2+)</name>
        <dbReference type="ChEBI" id="CHEBI:29105"/>
    </cofactor>
    <text evidence="1">Binds 2 Zn(2+) ions per subunit.</text>
</comment>
<comment type="similarity">
    <text evidence="2">Belongs to the metallo-beta-lactamase superfamily.</text>
</comment>
<gene>
    <name type="primary">yqjP</name>
    <name type="ordered locus">BSU23790</name>
</gene>
<reference key="1">
    <citation type="journal article" date="1996" name="Microbiology">
        <title>Systematic sequencing of the 283 kb 210 degrees-232 degrees region of the Bacillus subtilis genome containing the skin element and many sporulation genes.</title>
        <authorList>
            <person name="Mizuno M."/>
            <person name="Masuda S."/>
            <person name="Takemaru K."/>
            <person name="Hosono S."/>
            <person name="Sato T."/>
            <person name="Takeuchi M."/>
            <person name="Kobayashi Y."/>
        </authorList>
    </citation>
    <scope>NUCLEOTIDE SEQUENCE [GENOMIC DNA]</scope>
    <source>
        <strain>168 / JH642</strain>
    </source>
</reference>
<reference key="2">
    <citation type="journal article" date="1997" name="Nature">
        <title>The complete genome sequence of the Gram-positive bacterium Bacillus subtilis.</title>
        <authorList>
            <person name="Kunst F."/>
            <person name="Ogasawara N."/>
            <person name="Moszer I."/>
            <person name="Albertini A.M."/>
            <person name="Alloni G."/>
            <person name="Azevedo V."/>
            <person name="Bertero M.G."/>
            <person name="Bessieres P."/>
            <person name="Bolotin A."/>
            <person name="Borchert S."/>
            <person name="Borriss R."/>
            <person name="Boursier L."/>
            <person name="Brans A."/>
            <person name="Braun M."/>
            <person name="Brignell S.C."/>
            <person name="Bron S."/>
            <person name="Brouillet S."/>
            <person name="Bruschi C.V."/>
            <person name="Caldwell B."/>
            <person name="Capuano V."/>
            <person name="Carter N.M."/>
            <person name="Choi S.-K."/>
            <person name="Codani J.-J."/>
            <person name="Connerton I.F."/>
            <person name="Cummings N.J."/>
            <person name="Daniel R.A."/>
            <person name="Denizot F."/>
            <person name="Devine K.M."/>
            <person name="Duesterhoeft A."/>
            <person name="Ehrlich S.D."/>
            <person name="Emmerson P.T."/>
            <person name="Entian K.-D."/>
            <person name="Errington J."/>
            <person name="Fabret C."/>
            <person name="Ferrari E."/>
            <person name="Foulger D."/>
            <person name="Fritz C."/>
            <person name="Fujita M."/>
            <person name="Fujita Y."/>
            <person name="Fuma S."/>
            <person name="Galizzi A."/>
            <person name="Galleron N."/>
            <person name="Ghim S.-Y."/>
            <person name="Glaser P."/>
            <person name="Goffeau A."/>
            <person name="Golightly E.J."/>
            <person name="Grandi G."/>
            <person name="Guiseppi G."/>
            <person name="Guy B.J."/>
            <person name="Haga K."/>
            <person name="Haiech J."/>
            <person name="Harwood C.R."/>
            <person name="Henaut A."/>
            <person name="Hilbert H."/>
            <person name="Holsappel S."/>
            <person name="Hosono S."/>
            <person name="Hullo M.-F."/>
            <person name="Itaya M."/>
            <person name="Jones L.-M."/>
            <person name="Joris B."/>
            <person name="Karamata D."/>
            <person name="Kasahara Y."/>
            <person name="Klaerr-Blanchard M."/>
            <person name="Klein C."/>
            <person name="Kobayashi Y."/>
            <person name="Koetter P."/>
            <person name="Koningstein G."/>
            <person name="Krogh S."/>
            <person name="Kumano M."/>
            <person name="Kurita K."/>
            <person name="Lapidus A."/>
            <person name="Lardinois S."/>
            <person name="Lauber J."/>
            <person name="Lazarevic V."/>
            <person name="Lee S.-M."/>
            <person name="Levine A."/>
            <person name="Liu H."/>
            <person name="Masuda S."/>
            <person name="Mauel C."/>
            <person name="Medigue C."/>
            <person name="Medina N."/>
            <person name="Mellado R.P."/>
            <person name="Mizuno M."/>
            <person name="Moestl D."/>
            <person name="Nakai S."/>
            <person name="Noback M."/>
            <person name="Noone D."/>
            <person name="O'Reilly M."/>
            <person name="Ogawa K."/>
            <person name="Ogiwara A."/>
            <person name="Oudega B."/>
            <person name="Park S.-H."/>
            <person name="Parro V."/>
            <person name="Pohl T.M."/>
            <person name="Portetelle D."/>
            <person name="Porwollik S."/>
            <person name="Prescott A.M."/>
            <person name="Presecan E."/>
            <person name="Pujic P."/>
            <person name="Purnelle B."/>
            <person name="Rapoport G."/>
            <person name="Rey M."/>
            <person name="Reynolds S."/>
            <person name="Rieger M."/>
            <person name="Rivolta C."/>
            <person name="Rocha E."/>
            <person name="Roche B."/>
            <person name="Rose M."/>
            <person name="Sadaie Y."/>
            <person name="Sato T."/>
            <person name="Scanlan E."/>
            <person name="Schleich S."/>
            <person name="Schroeter R."/>
            <person name="Scoffone F."/>
            <person name="Sekiguchi J."/>
            <person name="Sekowska A."/>
            <person name="Seror S.J."/>
            <person name="Serror P."/>
            <person name="Shin B.-S."/>
            <person name="Soldo B."/>
            <person name="Sorokin A."/>
            <person name="Tacconi E."/>
            <person name="Takagi T."/>
            <person name="Takahashi H."/>
            <person name="Takemaru K."/>
            <person name="Takeuchi M."/>
            <person name="Tamakoshi A."/>
            <person name="Tanaka T."/>
            <person name="Terpstra P."/>
            <person name="Tognoni A."/>
            <person name="Tosato V."/>
            <person name="Uchiyama S."/>
            <person name="Vandenbol M."/>
            <person name="Vannier F."/>
            <person name="Vassarotti A."/>
            <person name="Viari A."/>
            <person name="Wambutt R."/>
            <person name="Wedler E."/>
            <person name="Wedler H."/>
            <person name="Weitzenegger T."/>
            <person name="Winters P."/>
            <person name="Wipat A."/>
            <person name="Yamamoto H."/>
            <person name="Yamane K."/>
            <person name="Yasumoto K."/>
            <person name="Yata K."/>
            <person name="Yoshida K."/>
            <person name="Yoshikawa H.-F."/>
            <person name="Zumstein E."/>
            <person name="Yoshikawa H."/>
            <person name="Danchin A."/>
        </authorList>
    </citation>
    <scope>NUCLEOTIDE SEQUENCE [LARGE SCALE GENOMIC DNA]</scope>
    <source>
        <strain>168</strain>
    </source>
</reference>
<feature type="chain" id="PRO_0000049833" description="Probable metallo-hydrolase YqjP">
    <location>
        <begin position="1"/>
        <end position="319"/>
    </location>
</feature>
<feature type="binding site" evidence="1">
    <location>
        <position position="67"/>
    </location>
    <ligand>
        <name>Zn(2+)</name>
        <dbReference type="ChEBI" id="CHEBI:29105"/>
        <label>1</label>
    </ligand>
</feature>
<feature type="binding site" evidence="1">
    <location>
        <position position="69"/>
    </location>
    <ligand>
        <name>Zn(2+)</name>
        <dbReference type="ChEBI" id="CHEBI:29105"/>
        <label>1</label>
    </ligand>
</feature>
<feature type="binding site" evidence="1">
    <location>
        <position position="71"/>
    </location>
    <ligand>
        <name>Zn(2+)</name>
        <dbReference type="ChEBI" id="CHEBI:29105"/>
        <label>2</label>
    </ligand>
</feature>
<feature type="binding site" evidence="1">
    <location>
        <position position="72"/>
    </location>
    <ligand>
        <name>Zn(2+)</name>
        <dbReference type="ChEBI" id="CHEBI:29105"/>
        <label>2</label>
    </ligand>
</feature>
<feature type="binding site" evidence="1">
    <location>
        <position position="165"/>
    </location>
    <ligand>
        <name>Zn(2+)</name>
        <dbReference type="ChEBI" id="CHEBI:29105"/>
        <label>1</label>
    </ligand>
</feature>
<feature type="binding site" evidence="1">
    <location>
        <position position="184"/>
    </location>
    <ligand>
        <name>Zn(2+)</name>
        <dbReference type="ChEBI" id="CHEBI:29105"/>
        <label>1</label>
    </ligand>
</feature>
<feature type="binding site" evidence="1">
    <location>
        <position position="184"/>
    </location>
    <ligand>
        <name>Zn(2+)</name>
        <dbReference type="ChEBI" id="CHEBI:29105"/>
        <label>2</label>
    </ligand>
</feature>
<feature type="binding site" evidence="1">
    <location>
        <position position="231"/>
    </location>
    <ligand>
        <name>Zn(2+)</name>
        <dbReference type="ChEBI" id="CHEBI:29105"/>
        <label>2</label>
    </ligand>
</feature>
<evidence type="ECO:0000250" key="1"/>
<evidence type="ECO:0000305" key="2"/>
<name>YQJP_BACSU</name>
<keyword id="KW-0378">Hydrolase</keyword>
<keyword id="KW-0479">Metal-binding</keyword>
<keyword id="KW-1185">Reference proteome</keyword>
<keyword id="KW-0862">Zinc</keyword>
<protein>
    <recommendedName>
        <fullName>Probable metallo-hydrolase YqjP</fullName>
        <ecNumber>3.-.-.-</ecNumber>
    </recommendedName>
</protein>
<dbReference type="EC" id="3.-.-.-"/>
<dbReference type="EMBL" id="D84432">
    <property type="protein sequence ID" value="BAA12622.1"/>
    <property type="molecule type" value="Genomic_DNA"/>
</dbReference>
<dbReference type="EMBL" id="AL009126">
    <property type="protein sequence ID" value="CAB14311.1"/>
    <property type="molecule type" value="Genomic_DNA"/>
</dbReference>
<dbReference type="PIR" id="H69964">
    <property type="entry name" value="H69964"/>
</dbReference>
<dbReference type="RefSeq" id="NP_390260.1">
    <property type="nucleotide sequence ID" value="NC_000964.3"/>
</dbReference>
<dbReference type="RefSeq" id="WP_004398688.1">
    <property type="nucleotide sequence ID" value="NZ_OZ025638.1"/>
</dbReference>
<dbReference type="SMR" id="P54553"/>
<dbReference type="FunCoup" id="P54553">
    <property type="interactions" value="262"/>
</dbReference>
<dbReference type="STRING" id="224308.BSU23790"/>
<dbReference type="PaxDb" id="224308-BSU23790"/>
<dbReference type="EnsemblBacteria" id="CAB14311">
    <property type="protein sequence ID" value="CAB14311"/>
    <property type="gene ID" value="BSU_23790"/>
</dbReference>
<dbReference type="GeneID" id="938701"/>
<dbReference type="KEGG" id="bsu:BSU23790"/>
<dbReference type="PATRIC" id="fig|224308.179.peg.2592"/>
<dbReference type="eggNOG" id="COG0491">
    <property type="taxonomic scope" value="Bacteria"/>
</dbReference>
<dbReference type="InParanoid" id="P54553"/>
<dbReference type="OrthoDB" id="2971563at2"/>
<dbReference type="PhylomeDB" id="P54553"/>
<dbReference type="BioCyc" id="BSUB:BSU23790-MONOMER"/>
<dbReference type="Proteomes" id="UP000001570">
    <property type="component" value="Chromosome"/>
</dbReference>
<dbReference type="GO" id="GO:0016787">
    <property type="term" value="F:hydrolase activity"/>
    <property type="evidence" value="ECO:0007669"/>
    <property type="project" value="UniProtKB-KW"/>
</dbReference>
<dbReference type="GO" id="GO:0046872">
    <property type="term" value="F:metal ion binding"/>
    <property type="evidence" value="ECO:0007669"/>
    <property type="project" value="UniProtKB-KW"/>
</dbReference>
<dbReference type="CDD" id="cd07725">
    <property type="entry name" value="TTHA1429-like_MBL-fold"/>
    <property type="match status" value="1"/>
</dbReference>
<dbReference type="Gene3D" id="3.60.15.10">
    <property type="entry name" value="Ribonuclease Z/Hydroxyacylglutathione hydrolase-like"/>
    <property type="match status" value="1"/>
</dbReference>
<dbReference type="Gene3D" id="1.10.10.10">
    <property type="entry name" value="Winged helix-like DNA-binding domain superfamily/Winged helix DNA-binding domain"/>
    <property type="match status" value="1"/>
</dbReference>
<dbReference type="InterPro" id="IPR001279">
    <property type="entry name" value="Metallo-B-lactamas"/>
</dbReference>
<dbReference type="InterPro" id="IPR050855">
    <property type="entry name" value="NDM-1-like"/>
</dbReference>
<dbReference type="InterPro" id="IPR036866">
    <property type="entry name" value="RibonucZ/Hydroxyglut_hydro"/>
</dbReference>
<dbReference type="InterPro" id="IPR036388">
    <property type="entry name" value="WH-like_DNA-bd_sf"/>
</dbReference>
<dbReference type="PANTHER" id="PTHR42951">
    <property type="entry name" value="METALLO-BETA-LACTAMASE DOMAIN-CONTAINING"/>
    <property type="match status" value="1"/>
</dbReference>
<dbReference type="PANTHER" id="PTHR42951:SF21">
    <property type="entry name" value="METALLO-HYDROLASE YQJP-RELATED"/>
    <property type="match status" value="1"/>
</dbReference>
<dbReference type="Pfam" id="PF00753">
    <property type="entry name" value="Lactamase_B"/>
    <property type="match status" value="1"/>
</dbReference>
<dbReference type="SMART" id="SM00849">
    <property type="entry name" value="Lactamase_B"/>
    <property type="match status" value="1"/>
</dbReference>
<dbReference type="SUPFAM" id="SSF56281">
    <property type="entry name" value="Metallo-hydrolase/oxidoreductase"/>
    <property type="match status" value="1"/>
</dbReference>
<organism>
    <name type="scientific">Bacillus subtilis (strain 168)</name>
    <dbReference type="NCBI Taxonomy" id="224308"/>
    <lineage>
        <taxon>Bacteria</taxon>
        <taxon>Bacillati</taxon>
        <taxon>Bacillota</taxon>
        <taxon>Bacilli</taxon>
        <taxon>Bacillales</taxon>
        <taxon>Bacillaceae</taxon>
        <taxon>Bacillus</taxon>
    </lineage>
</organism>